<name>Y1130_ACIB5</name>
<feature type="chain" id="PRO_1000200122" description="UPF0102 protein AB57_1130">
    <location>
        <begin position="1"/>
        <end position="133"/>
    </location>
</feature>
<reference key="1">
    <citation type="journal article" date="2008" name="J. Bacteriol.">
        <title>Comparative genome sequence analysis of multidrug-resistant Acinetobacter baumannii.</title>
        <authorList>
            <person name="Adams M.D."/>
            <person name="Goglin K."/>
            <person name="Molyneaux N."/>
            <person name="Hujer K.M."/>
            <person name="Lavender H."/>
            <person name="Jamison J.J."/>
            <person name="MacDonald I.J."/>
            <person name="Martin K.M."/>
            <person name="Russo T."/>
            <person name="Campagnari A.A."/>
            <person name="Hujer A.M."/>
            <person name="Bonomo R.A."/>
            <person name="Gill S.R."/>
        </authorList>
    </citation>
    <scope>NUCLEOTIDE SEQUENCE [LARGE SCALE GENOMIC DNA]</scope>
    <source>
        <strain>AB0057</strain>
    </source>
</reference>
<proteinExistence type="inferred from homology"/>
<evidence type="ECO:0000255" key="1">
    <source>
        <dbReference type="HAMAP-Rule" id="MF_00048"/>
    </source>
</evidence>
<accession>B7I8W9</accession>
<dbReference type="EMBL" id="CP001182">
    <property type="protein sequence ID" value="ACJ40154.1"/>
    <property type="molecule type" value="Genomic_DNA"/>
</dbReference>
<dbReference type="RefSeq" id="WP_000959396.1">
    <property type="nucleotide sequence ID" value="NC_011586.2"/>
</dbReference>
<dbReference type="SMR" id="B7I8W9"/>
<dbReference type="KEGG" id="abn:AB57_1130"/>
<dbReference type="HOGENOM" id="CLU_115353_1_1_6"/>
<dbReference type="Proteomes" id="UP000007094">
    <property type="component" value="Chromosome"/>
</dbReference>
<dbReference type="GO" id="GO:0003676">
    <property type="term" value="F:nucleic acid binding"/>
    <property type="evidence" value="ECO:0007669"/>
    <property type="project" value="InterPro"/>
</dbReference>
<dbReference type="CDD" id="cd20736">
    <property type="entry name" value="PoNe_Nuclease"/>
    <property type="match status" value="1"/>
</dbReference>
<dbReference type="Gene3D" id="3.40.1350.10">
    <property type="match status" value="1"/>
</dbReference>
<dbReference type="HAMAP" id="MF_00048">
    <property type="entry name" value="UPF0102"/>
    <property type="match status" value="1"/>
</dbReference>
<dbReference type="InterPro" id="IPR011335">
    <property type="entry name" value="Restrct_endonuc-II-like"/>
</dbReference>
<dbReference type="InterPro" id="IPR011856">
    <property type="entry name" value="tRNA_endonuc-like_dom_sf"/>
</dbReference>
<dbReference type="InterPro" id="IPR003509">
    <property type="entry name" value="UPF0102_YraN-like"/>
</dbReference>
<dbReference type="NCBIfam" id="NF009150">
    <property type="entry name" value="PRK12497.1-3"/>
    <property type="match status" value="1"/>
</dbReference>
<dbReference type="NCBIfam" id="NF011267">
    <property type="entry name" value="PRK14674.1"/>
    <property type="match status" value="1"/>
</dbReference>
<dbReference type="NCBIfam" id="TIGR00252">
    <property type="entry name" value="YraN family protein"/>
    <property type="match status" value="1"/>
</dbReference>
<dbReference type="PANTHER" id="PTHR34039">
    <property type="entry name" value="UPF0102 PROTEIN YRAN"/>
    <property type="match status" value="1"/>
</dbReference>
<dbReference type="PANTHER" id="PTHR34039:SF1">
    <property type="entry name" value="UPF0102 PROTEIN YRAN"/>
    <property type="match status" value="1"/>
</dbReference>
<dbReference type="Pfam" id="PF02021">
    <property type="entry name" value="UPF0102"/>
    <property type="match status" value="1"/>
</dbReference>
<dbReference type="SUPFAM" id="SSF52980">
    <property type="entry name" value="Restriction endonuclease-like"/>
    <property type="match status" value="1"/>
</dbReference>
<protein>
    <recommendedName>
        <fullName evidence="1">UPF0102 protein AB57_1130</fullName>
    </recommendedName>
</protein>
<organism>
    <name type="scientific">Acinetobacter baumannii (strain AB0057)</name>
    <dbReference type="NCBI Taxonomy" id="480119"/>
    <lineage>
        <taxon>Bacteria</taxon>
        <taxon>Pseudomonadati</taxon>
        <taxon>Pseudomonadota</taxon>
        <taxon>Gammaproteobacteria</taxon>
        <taxon>Moraxellales</taxon>
        <taxon>Moraxellaceae</taxon>
        <taxon>Acinetobacter</taxon>
        <taxon>Acinetobacter calcoaceticus/baumannii complex</taxon>
    </lineage>
</organism>
<gene>
    <name type="ordered locus">AB57_1130</name>
</gene>
<comment type="similarity">
    <text evidence="1">Belongs to the UPF0102 family.</text>
</comment>
<sequence length="133" mass="15773">MLVAQQLGQWAEQTALKLLKEQNYEWVASNYHSRRGEVDLIVKRGNELIFVEVKARGQGNYGQACEMVTLSKQKKIIKTAMRFLQRYPSYQDFYCRFDVICFDFPQKIAKTVQQDFSKFHYDLQWIENAFTLD</sequence>